<organism>
    <name type="scientific">Escherichia coli (strain K12)</name>
    <dbReference type="NCBI Taxonomy" id="83333"/>
    <lineage>
        <taxon>Bacteria</taxon>
        <taxon>Pseudomonadati</taxon>
        <taxon>Pseudomonadota</taxon>
        <taxon>Gammaproteobacteria</taxon>
        <taxon>Enterobacterales</taxon>
        <taxon>Enterobacteriaceae</taxon>
        <taxon>Escherichia</taxon>
    </lineage>
</organism>
<comment type="function">
    <text evidence="2 3 6 8 11 13">Involved in the uptake of iron in complex with ferrichrome, a hydroxamate-type siderophore. Binds and transports ferrichrome-iron across the outer membrane (PubMed:1089064, PubMed:2066336). In addition to its role in ferrichrome-iron transport, transports the antibiotic albomycin, which is a structural analog of ferrichrome, and acts as a receptor for colicin M, microcin J25 and bacteriophages T1, T5, phi80 and UC-1 (PubMed:1089064, PubMed:2066336, PubMed:353030, PubMed:8617231). The energy source, which is required for all FhuA functions except infection by phage T5, is provided by the inner membrane TonB system (PubMed:12427941, PubMed:353030, PubMed:9353297).</text>
</comment>
<comment type="activity regulation">
    <text evidence="3 13">Binding of ferrichrome or colicin M enhances the interaction between FhuA and TonB (PubMed:9353297). TonB activates FhuA through interaction with the beta-barrel (PubMed:12427941).</text>
</comment>
<comment type="subunit">
    <text evidence="3 4 9 10 12 13 14 15">Monomer (PubMed:36215462, PubMed:36779755, PubMed:8916906, PubMed:9856937, PubMed:9865695). Interacts with TonB (PubMed:12427941, PubMed:18653801, PubMed:9353297). Interacts with Escherichia phage T5 receptor-binding protein pb5 (RBP-pb5); this interaction is necessary for the entry of the viral genome into the host cell (PubMed:36215462, PubMed:36779755).</text>
</comment>
<comment type="interaction">
    <interactant intactId="EBI-1116714">
        <id>P06971</id>
    </interactant>
    <interactant intactId="EBI-6399993">
        <id>P02929</id>
        <label>tonB</label>
    </interactant>
    <organismsDiffer>false</organismsDiffer>
    <experiments>4</experiments>
</comment>
<comment type="interaction">
    <interactant intactId="EBI-1116714">
        <id>P06971</id>
    </interactant>
    <interactant intactId="EBI-16100378">
        <id>Q9X2V7</id>
        <label>mcjA</label>
    </interactant>
    <organismsDiffer>true</organismsDiffer>
    <experiments>2</experiments>
</comment>
<comment type="subcellular location">
    <subcellularLocation>
        <location evidence="6 12 14 15">Cell outer membrane</location>
        <topology evidence="14 15">Multi-pass membrane protein</topology>
    </subcellularLocation>
</comment>
<comment type="induction">
    <text evidence="5">Induced 1.6-fold by hydroxyurea.</text>
</comment>
<comment type="domain">
    <text evidence="4 11 13 15">Has two distinct conformations in the presence and absence of ferrichrome. The globular N-terminal domain acts a plug that closes the channel formed by the beta-barrel. Binding of ferrichrome at the cell surface induces a conformational change in FhuA, but does not open the channel. Structural changes are propagated and amplified across the plug, and may facilitate binding of FhuA to TonB (PubMed:9353297, PubMed:9865695). TonB binding promotes conformational changes in outer surface-exposed loops of FhuA (PubMed:18653801). Phage T5 is a TonB-independent ligand, and its binding to FhuA results in the formation of high conductance ion channels (PubMed:8617231, PubMed:9353297).</text>
</comment>
<comment type="similarity">
    <text evidence="18">Belongs to the TonB-dependent receptor family.</text>
</comment>
<sequence>MARSKTAQPKHSLRKIAVVVATAVSGMSVYAQAAVEPKEDTITVTAAPAPQESAWGPAATIAARQSATGTKTDTPIQKVPQSISVVTAEEMALHQPKSVKEALSYTPGVSVGTRGASNTYDHLIIRGFAAEGQSQNNYLNGLKLQGNFYNDAVIDPYMLERAEIMRGPVSVLYGKSSPGGLLNMVSKRPTTEPLKEVQFKAGTDSLFQTGFDFSDSLDDDGVYSYRLTGLARSANAQQKGSEEQRYAIAPAFTWRPDDKTNFTFLSYFQNEPETGYYGWLPKEGTVEPLPNGKRLPTDFNEGAKNNTYSRNEKMVGYSFDHEFNDTFTVRQNLRFAENKTSQNSVYGYGVCSDPANAYSKQCAALAPADKGHYLARKYVVDDEKLQNFSVDTQLQSKFATGDIDHTLLTGVDFMRMRNDINAWFGYDDSVPLLNLYNPVNTDFDFNAKDPANSGPYRILNKQKQTGVYVQDQAQWDKVLVTLGGRYDWADQESLNRVAGTTDKRDDKQFTWRGGVNYLFDNGVTPYFSYSESFEPSSQVGKDGNIFAPSKGKQYEVGVKYVPEDRPIVVTGAVYNLTKTNNLMADPEGSFFSVEGGEIRARGVEIEAKAALSASVNVVGSYTYTDAEYTTDTTYKGNTPAQVPKHMASLWADYTFFDGPLSGLTLGTGGRYTGSSYGDPANSFKVGSYTVVDALVRYDLARVGMAGSNVALHVNNLFDREYVASCFNTYGCFWGAERQVVATATFRF</sequence>
<dbReference type="EMBL" id="M12486">
    <property type="protein sequence ID" value="AAB61768.1"/>
    <property type="molecule type" value="Genomic_DNA"/>
</dbReference>
<dbReference type="EMBL" id="U00096">
    <property type="protein sequence ID" value="AAC73261.1"/>
    <property type="molecule type" value="Genomic_DNA"/>
</dbReference>
<dbReference type="EMBL" id="AP009048">
    <property type="protein sequence ID" value="BAB96726.2"/>
    <property type="molecule type" value="Genomic_DNA"/>
</dbReference>
<dbReference type="EMBL" id="U70214">
    <property type="protein sequence ID" value="AAB08580.1"/>
    <property type="molecule type" value="Genomic_DNA"/>
</dbReference>
<dbReference type="EMBL" id="X05810">
    <property type="protein sequence ID" value="CAA29253.1"/>
    <property type="molecule type" value="Genomic_DNA"/>
</dbReference>
<dbReference type="PIR" id="F64738">
    <property type="entry name" value="QRECFE"/>
</dbReference>
<dbReference type="RefSeq" id="NP_414692.1">
    <property type="nucleotide sequence ID" value="NC_000913.3"/>
</dbReference>
<dbReference type="RefSeq" id="WP_000124438.1">
    <property type="nucleotide sequence ID" value="NZ_SSZK01000004.1"/>
</dbReference>
<dbReference type="PDB" id="1BY3">
    <property type="method" value="X-ray"/>
    <property type="resolution" value="2.74 A"/>
    <property type="chains" value="A=34-747"/>
</dbReference>
<dbReference type="PDB" id="1BY5">
    <property type="method" value="X-ray"/>
    <property type="resolution" value="2.60 A"/>
    <property type="chains" value="A=34-747"/>
</dbReference>
<dbReference type="PDB" id="1FCP">
    <property type="method" value="X-ray"/>
    <property type="resolution" value="2.70 A"/>
    <property type="chains" value="A=52-747"/>
</dbReference>
<dbReference type="PDB" id="1FI1">
    <property type="method" value="X-ray"/>
    <property type="resolution" value="2.90 A"/>
    <property type="chains" value="A=52-747"/>
</dbReference>
<dbReference type="PDB" id="1QFF">
    <property type="method" value="X-ray"/>
    <property type="resolution" value="2.70 A"/>
    <property type="chains" value="A=34-747"/>
</dbReference>
<dbReference type="PDB" id="1QFG">
    <property type="method" value="X-ray"/>
    <property type="resolution" value="2.50 A"/>
    <property type="chains" value="A=34-747"/>
</dbReference>
<dbReference type="PDB" id="1QJQ">
    <property type="method" value="X-ray"/>
    <property type="resolution" value="2.95 A"/>
    <property type="chains" value="A=34-747"/>
</dbReference>
<dbReference type="PDB" id="1QKC">
    <property type="method" value="X-ray"/>
    <property type="resolution" value="3.10 A"/>
    <property type="chains" value="A=34-747"/>
</dbReference>
<dbReference type="PDB" id="2FCP">
    <property type="method" value="X-ray"/>
    <property type="resolution" value="2.50 A"/>
    <property type="chains" value="A=34-747"/>
</dbReference>
<dbReference type="PDB" id="2GRX">
    <property type="method" value="X-ray"/>
    <property type="resolution" value="3.30 A"/>
    <property type="chains" value="A/B=34-747"/>
</dbReference>
<dbReference type="PDB" id="4CU4">
    <property type="method" value="X-ray"/>
    <property type="resolution" value="2.30 A"/>
    <property type="chains" value="A=53-747"/>
</dbReference>
<dbReference type="PDB" id="8A60">
    <property type="method" value="X-ray"/>
    <property type="resolution" value="3.37 A"/>
    <property type="chains" value="A=34-747"/>
</dbReference>
<dbReference type="PDB" id="8A8C">
    <property type="method" value="EM"/>
    <property type="resolution" value="3.10 A"/>
    <property type="chains" value="A=34-747"/>
</dbReference>
<dbReference type="PDB" id="8B14">
    <property type="method" value="EM"/>
    <property type="resolution" value="2.60 A"/>
    <property type="chains" value="A=34-747"/>
</dbReference>
<dbReference type="PDBsum" id="1BY3"/>
<dbReference type="PDBsum" id="1BY5"/>
<dbReference type="PDBsum" id="1FCP"/>
<dbReference type="PDBsum" id="1FI1"/>
<dbReference type="PDBsum" id="1QFF"/>
<dbReference type="PDBsum" id="1QFG"/>
<dbReference type="PDBsum" id="1QJQ"/>
<dbReference type="PDBsum" id="1QKC"/>
<dbReference type="PDBsum" id="2FCP"/>
<dbReference type="PDBsum" id="2GRX"/>
<dbReference type="PDBsum" id="4CU4"/>
<dbReference type="PDBsum" id="8A60"/>
<dbReference type="PDBsum" id="8A8C"/>
<dbReference type="PDBsum" id="8B14"/>
<dbReference type="EMDB" id="EMD-15229"/>
<dbReference type="EMDB" id="EMD-15802"/>
<dbReference type="PCDDB" id="P06971"/>
<dbReference type="SMR" id="P06971"/>
<dbReference type="BioGRID" id="4259745">
    <property type="interactions" value="144"/>
</dbReference>
<dbReference type="ComplexPortal" id="CPX-2843">
    <property type="entry name" value="Ferrichrome outer membrane transporter complex"/>
</dbReference>
<dbReference type="DIP" id="DIP-9602N"/>
<dbReference type="FunCoup" id="P06971">
    <property type="interactions" value="74"/>
</dbReference>
<dbReference type="IntAct" id="P06971">
    <property type="interactions" value="7"/>
</dbReference>
<dbReference type="STRING" id="511145.b0150"/>
<dbReference type="DrugBank" id="DB02767">
    <property type="generic name" value="(R)-3-hydroxytetradecanoic acid"/>
</dbReference>
<dbReference type="DrugBank" id="DB02907">
    <property type="generic name" value="2-Amino-Vinyl-Phosphate"/>
</dbReference>
<dbReference type="DrugBank" id="DB01814">
    <property type="generic name" value="2-Tridecanoyloxy-Pentadecanoic Acid"/>
</dbReference>
<dbReference type="DrugBank" id="DB03548">
    <property type="generic name" value="3-deoxy-alpha-D-manno-oct-2-ulopyranosonic acid"/>
</dbReference>
<dbReference type="DrugBank" id="DB02700">
    <property type="generic name" value="3-Deoxy-D-Glucosamine"/>
</dbReference>
<dbReference type="DrugBank" id="DB04039">
    <property type="generic name" value="3-Oxo-Pentadecanoic Acid"/>
</dbReference>
<dbReference type="DrugBank" id="DB02379">
    <property type="generic name" value="Beta-D-Glucose"/>
</dbReference>
<dbReference type="DrugBank" id="DB02613">
    <property type="generic name" value="Capric dimethyl amine oxide"/>
</dbReference>
<dbReference type="DrugBank" id="DB04220">
    <property type="generic name" value="CGP 4832"/>
</dbReference>
<dbReference type="DrugBank" id="DB02724">
    <property type="generic name" value="Delta-2-Albomycin A1"/>
</dbReference>
<dbReference type="DrugBank" id="DB03574">
    <property type="generic name" value="Ferricrocin-iron"/>
</dbReference>
<dbReference type="DrugBank" id="DB03111">
    <property type="generic name" value="Glucosamine 1-Phosphate"/>
</dbReference>
<dbReference type="DrugBank" id="DB02865">
    <property type="generic name" value="Glucosamine 4-Phosphate"/>
</dbReference>
<dbReference type="DrugBank" id="DB04526">
    <property type="generic name" value="L-Glycero-D-Manno-Heptopyranose"/>
</dbReference>
<dbReference type="DrugBank" id="DB03017">
    <property type="generic name" value="Lauric acid"/>
</dbReference>
<dbReference type="DrugBank" id="DB08231">
    <property type="generic name" value="Myristic acid"/>
</dbReference>
<dbReference type="DrugBank" id="DB02415">
    <property type="generic name" value="N-Octyl-2-Hydroxyethyl Sulfoxide"/>
</dbReference>
<dbReference type="DrugBank" id="DB02626">
    <property type="generic name" value="Phenylferricrocin-iron"/>
</dbReference>
<dbReference type="TCDB" id="1.B.14.1.2">
    <property type="family name" value="the outer membrane receptor (omr) family"/>
</dbReference>
<dbReference type="CarbonylDB" id="P06971"/>
<dbReference type="jPOST" id="P06971"/>
<dbReference type="PaxDb" id="511145-b0150"/>
<dbReference type="EnsemblBacteria" id="AAC73261">
    <property type="protein sequence ID" value="AAC73261"/>
    <property type="gene ID" value="b0150"/>
</dbReference>
<dbReference type="GeneID" id="75202035"/>
<dbReference type="GeneID" id="944856"/>
<dbReference type="KEGG" id="ecj:JW0146"/>
<dbReference type="KEGG" id="eco:b0150"/>
<dbReference type="PATRIC" id="fig|1411691.4.peg.2130"/>
<dbReference type="EchoBASE" id="EB0298"/>
<dbReference type="eggNOG" id="COG4774">
    <property type="taxonomic scope" value="Bacteria"/>
</dbReference>
<dbReference type="HOGENOM" id="CLU_008287_9_0_6"/>
<dbReference type="InParanoid" id="P06971"/>
<dbReference type="OMA" id="TNQYLDG"/>
<dbReference type="OrthoDB" id="127311at2"/>
<dbReference type="PhylomeDB" id="P06971"/>
<dbReference type="BioCyc" id="EcoCyc:EG10302-MONOMER"/>
<dbReference type="BioCyc" id="MetaCyc:EG10302-MONOMER"/>
<dbReference type="BRENDA" id="7.2.2.16">
    <property type="organism ID" value="2026"/>
</dbReference>
<dbReference type="EvolutionaryTrace" id="P06971"/>
<dbReference type="PRO" id="PR:P06971"/>
<dbReference type="Proteomes" id="UP000000625">
    <property type="component" value="Chromosome"/>
</dbReference>
<dbReference type="GO" id="GO:0009279">
    <property type="term" value="C:cell outer membrane"/>
    <property type="evidence" value="ECO:0000315"/>
    <property type="project" value="CACAO"/>
</dbReference>
<dbReference type="GO" id="GO:0016020">
    <property type="term" value="C:membrane"/>
    <property type="evidence" value="ECO:0000303"/>
    <property type="project" value="ComplexPortal"/>
</dbReference>
<dbReference type="GO" id="GO:1902495">
    <property type="term" value="C:transmembrane transporter complex"/>
    <property type="evidence" value="ECO:0000303"/>
    <property type="project" value="ComplexPortal"/>
</dbReference>
<dbReference type="GO" id="GO:0005506">
    <property type="term" value="F:iron ion binding"/>
    <property type="evidence" value="ECO:0000353"/>
    <property type="project" value="EcoliWiki"/>
</dbReference>
<dbReference type="GO" id="GO:0019904">
    <property type="term" value="F:protein domain specific binding"/>
    <property type="evidence" value="ECO:0000353"/>
    <property type="project" value="CAFA"/>
</dbReference>
<dbReference type="GO" id="GO:0015344">
    <property type="term" value="F:siderophore uptake transmembrane transporter activity"/>
    <property type="evidence" value="ECO:0000314"/>
    <property type="project" value="EcoCyc"/>
</dbReference>
<dbReference type="GO" id="GO:0038023">
    <property type="term" value="F:signaling receptor activity"/>
    <property type="evidence" value="ECO:0007669"/>
    <property type="project" value="InterPro"/>
</dbReference>
<dbReference type="GO" id="GO:0015643">
    <property type="term" value="F:toxic substance binding"/>
    <property type="evidence" value="ECO:0000315"/>
    <property type="project" value="EcoliWiki"/>
</dbReference>
<dbReference type="GO" id="GO:0046790">
    <property type="term" value="F:virion binding"/>
    <property type="evidence" value="ECO:0000315"/>
    <property type="project" value="EcoliWiki"/>
</dbReference>
<dbReference type="GO" id="GO:0006879">
    <property type="term" value="P:intracellular iron ion homeostasis"/>
    <property type="evidence" value="ECO:0000303"/>
    <property type="project" value="ComplexPortal"/>
</dbReference>
<dbReference type="GO" id="GO:0044718">
    <property type="term" value="P:siderophore transmembrane transport"/>
    <property type="evidence" value="ECO:0000314"/>
    <property type="project" value="EcoCyc"/>
</dbReference>
<dbReference type="GO" id="GO:0033214">
    <property type="term" value="P:siderophore-dependent iron import into cell"/>
    <property type="evidence" value="ECO:0000318"/>
    <property type="project" value="GO_Central"/>
</dbReference>
<dbReference type="CDD" id="cd01347">
    <property type="entry name" value="ligand_gated_channel"/>
    <property type="match status" value="1"/>
</dbReference>
<dbReference type="FunFam" id="2.170.130.10:FF:000001">
    <property type="entry name" value="Catecholate siderophore TonB-dependent receptor"/>
    <property type="match status" value="1"/>
</dbReference>
<dbReference type="FunFam" id="2.40.170.20:FF:000003">
    <property type="entry name" value="Ferrichrome outer membrane transporter/phage receptor"/>
    <property type="match status" value="1"/>
</dbReference>
<dbReference type="Gene3D" id="2.40.170.20">
    <property type="entry name" value="TonB-dependent receptor, beta-barrel domain"/>
    <property type="match status" value="1"/>
</dbReference>
<dbReference type="Gene3D" id="2.170.130.10">
    <property type="entry name" value="TonB-dependent receptor, plug domain"/>
    <property type="match status" value="1"/>
</dbReference>
<dbReference type="InterPro" id="IPR012910">
    <property type="entry name" value="Plug_dom"/>
</dbReference>
<dbReference type="InterPro" id="IPR037066">
    <property type="entry name" value="Plug_dom_sf"/>
</dbReference>
<dbReference type="InterPro" id="IPR039426">
    <property type="entry name" value="TonB-dep_rcpt-like"/>
</dbReference>
<dbReference type="InterPro" id="IPR000531">
    <property type="entry name" value="TonB-dep_rcpt_b-brl"/>
</dbReference>
<dbReference type="InterPro" id="IPR010916">
    <property type="entry name" value="TonB_box_CS"/>
</dbReference>
<dbReference type="InterPro" id="IPR036942">
    <property type="entry name" value="TonB_rcpt_b-brl_sf"/>
</dbReference>
<dbReference type="InterPro" id="IPR010917">
    <property type="entry name" value="TonB_rcpt_CS"/>
</dbReference>
<dbReference type="InterPro" id="IPR010105">
    <property type="entry name" value="TonB_sidphr_rcpt"/>
</dbReference>
<dbReference type="NCBIfam" id="NF007465">
    <property type="entry name" value="PRK10044.1"/>
    <property type="match status" value="1"/>
</dbReference>
<dbReference type="NCBIfam" id="TIGR01783">
    <property type="entry name" value="TonB-siderophor"/>
    <property type="match status" value="1"/>
</dbReference>
<dbReference type="PANTHER" id="PTHR32552">
    <property type="entry name" value="FERRICHROME IRON RECEPTOR-RELATED"/>
    <property type="match status" value="1"/>
</dbReference>
<dbReference type="PANTHER" id="PTHR32552:SF68">
    <property type="entry name" value="FERRICHROME OUTER MEMBRANE TRANSPORTER_PHAGE RECEPTOR"/>
    <property type="match status" value="1"/>
</dbReference>
<dbReference type="Pfam" id="PF07715">
    <property type="entry name" value="Plug"/>
    <property type="match status" value="1"/>
</dbReference>
<dbReference type="Pfam" id="PF00593">
    <property type="entry name" value="TonB_dep_Rec_b-barrel"/>
    <property type="match status" value="1"/>
</dbReference>
<dbReference type="SUPFAM" id="SSF56935">
    <property type="entry name" value="Porins"/>
    <property type="match status" value="1"/>
</dbReference>
<dbReference type="PROSITE" id="PS00430">
    <property type="entry name" value="TONB_DEPENDENT_REC_1"/>
    <property type="match status" value="1"/>
</dbReference>
<dbReference type="PROSITE" id="PS01156">
    <property type="entry name" value="TONB_DEPENDENT_REC_2"/>
    <property type="match status" value="1"/>
</dbReference>
<dbReference type="PROSITE" id="PS52016">
    <property type="entry name" value="TONB_DEPENDENT_REC_3"/>
    <property type="match status" value="1"/>
</dbReference>
<keyword id="KW-0002">3D-structure</keyword>
<keyword id="KW-0998">Cell outer membrane</keyword>
<keyword id="KW-0903">Direct protein sequencing</keyword>
<keyword id="KW-1015">Disulfide bond</keyword>
<keyword id="KW-0406">Ion transport</keyword>
<keyword id="KW-0408">Iron</keyword>
<keyword id="KW-0410">Iron transport</keyword>
<keyword id="KW-0472">Membrane</keyword>
<keyword id="KW-0675">Receptor</keyword>
<keyword id="KW-1185">Reference proteome</keyword>
<keyword id="KW-0732">Signal</keyword>
<keyword id="KW-0798">TonB box</keyword>
<keyword id="KW-0812">Transmembrane</keyword>
<keyword id="KW-1134">Transmembrane beta strand</keyword>
<keyword id="KW-0813">Transport</keyword>
<protein>
    <recommendedName>
        <fullName evidence="18">Ferrichrome outer membrane transporter/phage receptor</fullName>
    </recommendedName>
    <alternativeName>
        <fullName evidence="18">Ferric hydroxamate receptor</fullName>
    </alternativeName>
    <alternativeName>
        <fullName evidence="18">Ferric hydroxamate uptake</fullName>
    </alternativeName>
    <alternativeName>
        <fullName evidence="17">Ferrichrome-iron receptor</fullName>
    </alternativeName>
</protein>
<feature type="signal peptide" evidence="7">
    <location>
        <begin position="1"/>
        <end position="33"/>
    </location>
</feature>
<feature type="chain" id="PRO_0000034748" description="Ferrichrome outer membrane transporter/phage receptor">
    <location>
        <begin position="34"/>
        <end position="747"/>
    </location>
</feature>
<feature type="topological domain" description="Periplasmic">
    <location>
        <begin position="34"/>
        <end position="192"/>
    </location>
</feature>
<feature type="transmembrane region" description="Beta stranded">
    <location>
        <begin position="193"/>
        <end position="201"/>
    </location>
</feature>
<feature type="topological domain" description="Extracellular">
    <location>
        <begin position="202"/>
        <end position="206"/>
    </location>
</feature>
<feature type="transmembrane region" description="Beta stranded">
    <location>
        <begin position="207"/>
        <end position="215"/>
    </location>
</feature>
<feature type="topological domain" description="Periplasmic">
    <location>
        <begin position="216"/>
        <end position="222"/>
    </location>
</feature>
<feature type="transmembrane region" description="Beta stranded">
    <location>
        <begin position="223"/>
        <end position="231"/>
    </location>
</feature>
<feature type="topological domain" description="Extracellular">
    <location>
        <begin position="232"/>
        <end position="245"/>
    </location>
</feature>
<feature type="transmembrane region" description="Beta stranded">
    <location>
        <begin position="246"/>
        <end position="255"/>
    </location>
</feature>
<feature type="topological domain" description="Periplasmic">
    <location>
        <begin position="256"/>
        <end position="259"/>
    </location>
</feature>
<feature type="transmembrane region" description="Beta stranded">
    <location>
        <begin position="260"/>
        <end position="268"/>
    </location>
</feature>
<feature type="topological domain" description="Extracellular">
    <location>
        <begin position="269"/>
        <end position="312"/>
    </location>
</feature>
<feature type="transmembrane region" description="Beta stranded">
    <location>
        <begin position="313"/>
        <end position="321"/>
    </location>
</feature>
<feature type="topological domain" description="Periplasmic">
    <location>
        <begin position="322"/>
        <end position="326"/>
    </location>
</feature>
<feature type="transmembrane region" description="Beta stranded">
    <location>
        <begin position="327"/>
        <end position="335"/>
    </location>
</feature>
<feature type="topological domain" description="Extracellular">
    <location>
        <begin position="336"/>
        <end position="387"/>
    </location>
</feature>
<feature type="transmembrane region" description="Beta stranded">
    <location>
        <begin position="388"/>
        <end position="396"/>
    </location>
</feature>
<feature type="topological domain" description="Periplasmic">
    <location>
        <begin position="397"/>
        <end position="404"/>
    </location>
</feature>
<feature type="transmembrane region" description="Beta stranded">
    <location>
        <begin position="405"/>
        <end position="413"/>
    </location>
</feature>
<feature type="topological domain" description="Extracellular">
    <location>
        <begin position="414"/>
        <end position="464"/>
    </location>
</feature>
<feature type="transmembrane region" description="Beta stranded">
    <location>
        <begin position="465"/>
        <end position="473"/>
    </location>
</feature>
<feature type="topological domain" description="Periplasmic">
    <location>
        <begin position="474"/>
        <end position="477"/>
    </location>
</feature>
<feature type="transmembrane region" description="Beta stranded">
    <location>
        <begin position="478"/>
        <end position="486"/>
    </location>
</feature>
<feature type="topological domain" description="Extracellular">
    <location>
        <begin position="487"/>
        <end position="508"/>
    </location>
</feature>
<feature type="transmembrane region" description="Beta stranded">
    <location>
        <begin position="509"/>
        <end position="517"/>
    </location>
</feature>
<feature type="topological domain" description="Periplasmic">
    <location>
        <begin position="518"/>
        <end position="522"/>
    </location>
</feature>
<feature type="transmembrane region" description="Beta stranded">
    <location>
        <begin position="523"/>
        <end position="531"/>
    </location>
</feature>
<feature type="topological domain" description="Extracellular">
    <location>
        <begin position="532"/>
        <end position="551"/>
    </location>
</feature>
<feature type="transmembrane region" description="Beta stranded">
    <location>
        <begin position="552"/>
        <end position="560"/>
    </location>
</feature>
<feature type="topological domain" description="Periplasmic">
    <location>
        <begin position="561"/>
        <end position="565"/>
    </location>
</feature>
<feature type="transmembrane region" description="Beta stranded">
    <location>
        <begin position="566"/>
        <end position="574"/>
    </location>
</feature>
<feature type="topological domain" description="Extracellular">
    <location>
        <begin position="575"/>
        <end position="601"/>
    </location>
</feature>
<feature type="transmembrane region" description="Beta stranded">
    <location>
        <begin position="602"/>
        <end position="610"/>
    </location>
</feature>
<feature type="topological domain" description="Periplasmic">
    <location>
        <begin position="611"/>
        <end position="613"/>
    </location>
</feature>
<feature type="transmembrane region" description="Beta stranded">
    <location>
        <begin position="614"/>
        <end position="622"/>
    </location>
</feature>
<feature type="topological domain" description="Extracellular">
    <location>
        <begin position="623"/>
        <end position="645"/>
    </location>
</feature>
<feature type="transmembrane region" description="Beta stranded">
    <location>
        <begin position="646"/>
        <end position="654"/>
    </location>
</feature>
<feature type="topological domain" description="Periplasmic">
    <location>
        <begin position="655"/>
        <end position="661"/>
    </location>
</feature>
<feature type="transmembrane region" description="Beta stranded">
    <location>
        <begin position="662"/>
        <end position="670"/>
    </location>
</feature>
<feature type="topological domain" description="Extracellular">
    <location>
        <begin position="671"/>
        <end position="689"/>
    </location>
</feature>
<feature type="transmembrane region" description="Beta stranded">
    <location>
        <begin position="690"/>
        <end position="698"/>
    </location>
</feature>
<feature type="topological domain" description="Periplasmic">
    <location>
        <begin position="699"/>
        <end position="705"/>
    </location>
</feature>
<feature type="transmembrane region" description="Beta stranded">
    <location>
        <begin position="706"/>
        <end position="714"/>
    </location>
</feature>
<feature type="topological domain" description="Extracellular">
    <location>
        <begin position="715"/>
        <end position="737"/>
    </location>
</feature>
<feature type="transmembrane region" description="Beta stranded">
    <location>
        <begin position="738"/>
        <end position="746"/>
    </location>
</feature>
<feature type="topological domain" description="Periplasmic">
    <location>
        <position position="747"/>
    </location>
</feature>
<feature type="domain" description="TBDR plug" evidence="1">
    <location>
        <begin position="75"/>
        <end position="187"/>
    </location>
</feature>
<feature type="domain" description="TBDR beta-barrel" evidence="1">
    <location>
        <begin position="192"/>
        <end position="747"/>
    </location>
</feature>
<feature type="short sequence motif" description="TonB box">
    <location>
        <begin position="40"/>
        <end position="47"/>
    </location>
</feature>
<feature type="short sequence motif" description="TonB C-terminal box">
    <location>
        <begin position="730"/>
        <end position="747"/>
    </location>
</feature>
<feature type="binding site" evidence="19 20 21">
    <location>
        <position position="114"/>
    </location>
    <ligand>
        <name>ferrichrome</name>
        <dbReference type="ChEBI" id="CHEBI:5019"/>
    </ligand>
</feature>
<feature type="binding site" evidence="19 20 21">
    <location>
        <position position="133"/>
    </location>
    <ligand>
        <name>ferrichrome</name>
        <dbReference type="ChEBI" id="CHEBI:5019"/>
    </ligand>
</feature>
<feature type="binding site" evidence="19 20 21">
    <location>
        <begin position="148"/>
        <end position="149"/>
    </location>
    <ligand>
        <name>ferrichrome</name>
        <dbReference type="ChEBI" id="CHEBI:5019"/>
    </ligand>
</feature>
<feature type="binding site" evidence="19 20 21">
    <location>
        <begin position="277"/>
        <end position="279"/>
    </location>
    <ligand>
        <name>ferrichrome</name>
        <dbReference type="ChEBI" id="CHEBI:5019"/>
    </ligand>
</feature>
<feature type="binding site" evidence="19 20 21">
    <location>
        <begin position="346"/>
        <end position="348"/>
    </location>
    <ligand>
        <name>ferrichrome</name>
        <dbReference type="ChEBI" id="CHEBI:5019"/>
    </ligand>
</feature>
<feature type="binding site" evidence="20">
    <location>
        <position position="424"/>
    </location>
    <ligand>
        <name>ferrichrome</name>
        <dbReference type="ChEBI" id="CHEBI:5019"/>
    </ligand>
</feature>
<feature type="binding site" evidence="20">
    <location>
        <position position="735"/>
    </location>
    <ligand>
        <name>ferrichrome</name>
        <dbReference type="ChEBI" id="CHEBI:5019"/>
    </ligand>
</feature>
<feature type="site" description="Interaction with phage T5 RBP-pb5" evidence="10">
    <location>
        <position position="566"/>
    </location>
</feature>
<feature type="disulfide bond">
    <location>
        <begin position="351"/>
        <end position="362"/>
    </location>
</feature>
<feature type="disulfide bond">
    <location>
        <begin position="725"/>
        <end position="731"/>
    </location>
</feature>
<feature type="sequence conflict" description="In Ref. 6; CAA29253." evidence="18" ref="6">
    <original>R</original>
    <variation>P</variation>
    <location>
        <position position="737"/>
    </location>
</feature>
<feature type="strand" evidence="35">
    <location>
        <begin position="44"/>
        <end position="46"/>
    </location>
</feature>
<feature type="helix" evidence="36">
    <location>
        <begin position="55"/>
        <end position="60"/>
    </location>
</feature>
<feature type="helix" evidence="36">
    <location>
        <begin position="62"/>
        <end position="64"/>
    </location>
</feature>
<feature type="strand" evidence="31">
    <location>
        <begin position="65"/>
        <end position="67"/>
    </location>
</feature>
<feature type="turn" evidence="36">
    <location>
        <begin position="68"/>
        <end position="70"/>
    </location>
</feature>
<feature type="helix" evidence="36">
    <location>
        <begin position="76"/>
        <end position="78"/>
    </location>
</feature>
<feature type="strand" evidence="37">
    <location>
        <begin position="79"/>
        <end position="81"/>
    </location>
</feature>
<feature type="strand" evidence="36">
    <location>
        <begin position="83"/>
        <end position="87"/>
    </location>
</feature>
<feature type="helix" evidence="36">
    <location>
        <begin position="88"/>
        <end position="94"/>
    </location>
</feature>
<feature type="helix" evidence="36">
    <location>
        <begin position="99"/>
        <end position="102"/>
    </location>
</feature>
<feature type="turn" evidence="36">
    <location>
        <begin position="103"/>
        <end position="105"/>
    </location>
</feature>
<feature type="strand" evidence="36">
    <location>
        <begin position="106"/>
        <end position="111"/>
    </location>
</feature>
<feature type="turn" evidence="36">
    <location>
        <begin position="113"/>
        <end position="116"/>
    </location>
</feature>
<feature type="strand" evidence="35">
    <location>
        <begin position="124"/>
        <end position="127"/>
    </location>
</feature>
<feature type="helix" evidence="36">
    <location>
        <begin position="131"/>
        <end position="133"/>
    </location>
</feature>
<feature type="strand" evidence="36">
    <location>
        <begin position="137"/>
        <end position="139"/>
    </location>
</feature>
<feature type="helix" evidence="36">
    <location>
        <begin position="156"/>
        <end position="158"/>
    </location>
</feature>
<feature type="strand" evidence="36">
    <location>
        <begin position="159"/>
        <end position="167"/>
    </location>
</feature>
<feature type="helix" evidence="36">
    <location>
        <begin position="170"/>
        <end position="173"/>
    </location>
</feature>
<feature type="strand" evidence="36">
    <location>
        <begin position="178"/>
        <end position="186"/>
    </location>
</feature>
<feature type="strand" evidence="36">
    <location>
        <begin position="194"/>
        <end position="202"/>
    </location>
</feature>
<feature type="turn" evidence="36">
    <location>
        <begin position="203"/>
        <end position="205"/>
    </location>
</feature>
<feature type="strand" evidence="36">
    <location>
        <begin position="206"/>
        <end position="235"/>
    </location>
</feature>
<feature type="strand" evidence="35">
    <location>
        <begin position="237"/>
        <end position="240"/>
    </location>
</feature>
<feature type="strand" evidence="36">
    <location>
        <begin position="242"/>
        <end position="257"/>
    </location>
</feature>
<feature type="strand" evidence="36">
    <location>
        <begin position="260"/>
        <end position="272"/>
    </location>
</feature>
<feature type="turn" evidence="36">
    <location>
        <begin position="284"/>
        <end position="286"/>
    </location>
</feature>
<feature type="strand" evidence="36">
    <location>
        <begin position="307"/>
        <end position="322"/>
    </location>
</feature>
<feature type="strand" evidence="36">
    <location>
        <begin position="324"/>
        <end position="350"/>
    </location>
</feature>
<feature type="helix" evidence="36">
    <location>
        <begin position="354"/>
        <end position="356"/>
    </location>
</feature>
<feature type="helix" evidence="36">
    <location>
        <begin position="360"/>
        <end position="364"/>
    </location>
</feature>
<feature type="turn" evidence="36">
    <location>
        <begin position="367"/>
        <end position="369"/>
    </location>
</feature>
<feature type="helix" evidence="36">
    <location>
        <begin position="370"/>
        <end position="372"/>
    </location>
</feature>
<feature type="strand" evidence="36">
    <location>
        <begin position="373"/>
        <end position="400"/>
    </location>
</feature>
<feature type="strand" evidence="36">
    <location>
        <begin position="403"/>
        <end position="434"/>
    </location>
</feature>
<feature type="turn" evidence="32">
    <location>
        <begin position="436"/>
        <end position="438"/>
    </location>
</feature>
<feature type="strand" evidence="34">
    <location>
        <begin position="445"/>
        <end position="447"/>
    </location>
</feature>
<feature type="turn" evidence="36">
    <location>
        <begin position="450"/>
        <end position="452"/>
    </location>
</feature>
<feature type="strand" evidence="36">
    <location>
        <begin position="453"/>
        <end position="475"/>
    </location>
</feature>
<feature type="strand" evidence="36">
    <location>
        <begin position="478"/>
        <end position="495"/>
    </location>
</feature>
<feature type="turn" evidence="36">
    <location>
        <begin position="496"/>
        <end position="499"/>
    </location>
</feature>
<feature type="strand" evidence="36">
    <location>
        <begin position="500"/>
        <end position="517"/>
    </location>
</feature>
<feature type="strand" evidence="36">
    <location>
        <begin position="522"/>
        <end position="534"/>
    </location>
</feature>
<feature type="strand" evidence="36">
    <location>
        <begin position="543"/>
        <end position="545"/>
    </location>
</feature>
<feature type="strand" evidence="36">
    <location>
        <begin position="549"/>
        <end position="560"/>
    </location>
</feature>
<feature type="strand" evidence="36">
    <location>
        <begin position="565"/>
        <end position="584"/>
    </location>
</feature>
<feature type="strand" evidence="38">
    <location>
        <begin position="586"/>
        <end position="588"/>
    </location>
</feature>
<feature type="strand" evidence="36">
    <location>
        <begin position="590"/>
        <end position="610"/>
    </location>
</feature>
<feature type="strand" evidence="36">
    <location>
        <begin position="612"/>
        <end position="630"/>
    </location>
</feature>
<feature type="turn" evidence="36">
    <location>
        <begin position="632"/>
        <end position="636"/>
    </location>
</feature>
<feature type="strand" evidence="36">
    <location>
        <begin position="644"/>
        <end position="655"/>
    </location>
</feature>
<feature type="strand" evidence="33">
    <location>
        <begin position="656"/>
        <end position="658"/>
    </location>
</feature>
<feature type="turn" evidence="36">
    <location>
        <begin position="659"/>
        <end position="662"/>
    </location>
</feature>
<feature type="strand" evidence="36">
    <location>
        <begin position="663"/>
        <end position="672"/>
    </location>
</feature>
<feature type="strand" evidence="36">
    <location>
        <begin position="675"/>
        <end position="678"/>
    </location>
</feature>
<feature type="strand" evidence="36">
    <location>
        <begin position="683"/>
        <end position="685"/>
    </location>
</feature>
<feature type="strand" evidence="36">
    <location>
        <begin position="688"/>
        <end position="698"/>
    </location>
</feature>
<feature type="helix" evidence="36">
    <location>
        <begin position="699"/>
        <end position="702"/>
    </location>
</feature>
<feature type="strand" evidence="36">
    <location>
        <begin position="708"/>
        <end position="715"/>
    </location>
</feature>
<feature type="strand" evidence="36">
    <location>
        <begin position="722"/>
        <end position="727"/>
    </location>
</feature>
<feature type="strand" evidence="36">
    <location>
        <begin position="730"/>
        <end position="733"/>
    </location>
</feature>
<feature type="strand" evidence="36">
    <location>
        <begin position="738"/>
        <end position="746"/>
    </location>
</feature>
<evidence type="ECO:0000255" key="1">
    <source>
        <dbReference type="PROSITE-ProRule" id="PRU01360"/>
    </source>
</evidence>
<evidence type="ECO:0000269" key="2">
    <source>
    </source>
</evidence>
<evidence type="ECO:0000269" key="3">
    <source>
    </source>
</evidence>
<evidence type="ECO:0000269" key="4">
    <source>
    </source>
</evidence>
<evidence type="ECO:0000269" key="5">
    <source>
    </source>
</evidence>
<evidence type="ECO:0000269" key="6">
    <source>
    </source>
</evidence>
<evidence type="ECO:0000269" key="7">
    <source>
    </source>
</evidence>
<evidence type="ECO:0000269" key="8">
    <source>
    </source>
</evidence>
<evidence type="ECO:0000269" key="9">
    <source>
    </source>
</evidence>
<evidence type="ECO:0000269" key="10">
    <source>
    </source>
</evidence>
<evidence type="ECO:0000269" key="11">
    <source>
    </source>
</evidence>
<evidence type="ECO:0000269" key="12">
    <source>
    </source>
</evidence>
<evidence type="ECO:0000269" key="13">
    <source>
    </source>
</evidence>
<evidence type="ECO:0000269" key="14">
    <source>
    </source>
</evidence>
<evidence type="ECO:0000269" key="15">
    <source>
    </source>
</evidence>
<evidence type="ECO:0000303" key="16">
    <source>
    </source>
</evidence>
<evidence type="ECO:0000303" key="17">
    <source>
    </source>
</evidence>
<evidence type="ECO:0000305" key="18"/>
<evidence type="ECO:0000305" key="19">
    <source>
    </source>
</evidence>
<evidence type="ECO:0000305" key="20">
    <source>
    </source>
</evidence>
<evidence type="ECO:0000305" key="21">
    <source>
    </source>
</evidence>
<evidence type="ECO:0007744" key="22">
    <source>
        <dbReference type="PDB" id="1BY3"/>
    </source>
</evidence>
<evidence type="ECO:0007744" key="23">
    <source>
        <dbReference type="PDB" id="1BY5"/>
    </source>
</evidence>
<evidence type="ECO:0007744" key="24">
    <source>
        <dbReference type="PDB" id="1FCP"/>
    </source>
</evidence>
<evidence type="ECO:0007744" key="25">
    <source>
        <dbReference type="PDB" id="1QJQ"/>
    </source>
</evidence>
<evidence type="ECO:0007744" key="26">
    <source>
        <dbReference type="PDB" id="1QKC"/>
    </source>
</evidence>
<evidence type="ECO:0007744" key="27">
    <source>
        <dbReference type="PDB" id="2FCP"/>
    </source>
</evidence>
<evidence type="ECO:0007744" key="28">
    <source>
        <dbReference type="PDB" id="8A60"/>
    </source>
</evidence>
<evidence type="ECO:0007744" key="29">
    <source>
        <dbReference type="PDB" id="8A8C"/>
    </source>
</evidence>
<evidence type="ECO:0007744" key="30">
    <source>
        <dbReference type="PDB" id="8B14"/>
    </source>
</evidence>
<evidence type="ECO:0007829" key="31">
    <source>
        <dbReference type="PDB" id="1BY5"/>
    </source>
</evidence>
<evidence type="ECO:0007829" key="32">
    <source>
        <dbReference type="PDB" id="1QFG"/>
    </source>
</evidence>
<evidence type="ECO:0007829" key="33">
    <source>
        <dbReference type="PDB" id="1QJQ"/>
    </source>
</evidence>
<evidence type="ECO:0007829" key="34">
    <source>
        <dbReference type="PDB" id="2FCP"/>
    </source>
</evidence>
<evidence type="ECO:0007829" key="35">
    <source>
        <dbReference type="PDB" id="2GRX"/>
    </source>
</evidence>
<evidence type="ECO:0007829" key="36">
    <source>
        <dbReference type="PDB" id="4CU4"/>
    </source>
</evidence>
<evidence type="ECO:0007829" key="37">
    <source>
        <dbReference type="PDB" id="8A8C"/>
    </source>
</evidence>
<evidence type="ECO:0007829" key="38">
    <source>
        <dbReference type="PDB" id="8B14"/>
    </source>
</evidence>
<name>FHUA_ECOLI</name>
<gene>
    <name evidence="17" type="primary">fhuA</name>
    <name evidence="16" type="synonym">tonA</name>
    <name type="ordered locus">b0150</name>
    <name type="ordered locus">JW0146</name>
</gene>
<proteinExistence type="evidence at protein level"/>
<accession>P06971</accession>
<accession>P71280</accession>
<accession>P75665</accession>
<reference key="1">
    <citation type="journal article" date="1986" name="J. Bacteriol.">
        <title>Protein fusions of beta-galactosidase to the ferrichrome-iron receptor of Escherichia coli K-12.</title>
        <authorList>
            <person name="Coulton J.W."/>
            <person name="Mason P."/>
            <person name="Cameron D.R."/>
            <person name="Carmel G."/>
            <person name="Jean R."/>
            <person name="Rode H.N."/>
        </authorList>
    </citation>
    <scope>NUCLEOTIDE SEQUENCE [GENOMIC DNA]</scope>
    <scope>PROTEIN SEQUENCE OF 34-47</scope>
    <source>
        <strain>K12</strain>
    </source>
</reference>
<reference key="2">
    <citation type="journal article" date="1994" name="Nucleic Acids Res.">
        <title>Systematic sequencing of the Escherichia coli genome: analysis of the 2.4-4.1 min (110,917-193,643 bp) region.</title>
        <authorList>
            <person name="Fujita N."/>
            <person name="Mori H."/>
            <person name="Yura T."/>
            <person name="Ishihama A."/>
        </authorList>
    </citation>
    <scope>NUCLEOTIDE SEQUENCE [LARGE SCALE GENOMIC DNA]</scope>
    <source>
        <strain>K12 / W3110 / ATCC 27325 / DSM 5911</strain>
    </source>
</reference>
<reference key="3">
    <citation type="journal article" date="1997" name="Science">
        <title>The complete genome sequence of Escherichia coli K-12.</title>
        <authorList>
            <person name="Blattner F.R."/>
            <person name="Plunkett G. III"/>
            <person name="Bloch C.A."/>
            <person name="Perna N.T."/>
            <person name="Burland V."/>
            <person name="Riley M."/>
            <person name="Collado-Vides J."/>
            <person name="Glasner J.D."/>
            <person name="Rode C.K."/>
            <person name="Mayhew G.F."/>
            <person name="Gregor J."/>
            <person name="Davis N.W."/>
            <person name="Kirkpatrick H.A."/>
            <person name="Goeden M.A."/>
            <person name="Rose D.J."/>
            <person name="Mau B."/>
            <person name="Shao Y."/>
        </authorList>
    </citation>
    <scope>NUCLEOTIDE SEQUENCE [LARGE SCALE GENOMIC DNA]</scope>
    <source>
        <strain>K12 / MG1655 / ATCC 47076</strain>
    </source>
</reference>
<reference key="4">
    <citation type="journal article" date="2006" name="Mol. Syst. Biol.">
        <title>Highly accurate genome sequences of Escherichia coli K-12 strains MG1655 and W3110.</title>
        <authorList>
            <person name="Hayashi K."/>
            <person name="Morooka N."/>
            <person name="Yamamoto Y."/>
            <person name="Fujita K."/>
            <person name="Isono K."/>
            <person name="Choi S."/>
            <person name="Ohtsubo E."/>
            <person name="Baba T."/>
            <person name="Wanner B.L."/>
            <person name="Mori H."/>
            <person name="Horiuchi T."/>
        </authorList>
    </citation>
    <scope>NUCLEOTIDE SEQUENCE [LARGE SCALE GENOMIC DNA]</scope>
    <scope>SEQUENCE REVISION TO 609-610</scope>
    <source>
        <strain>K12 / W3110 / ATCC 27325 / DSM 5911</strain>
    </source>
</reference>
<reference key="5">
    <citation type="submission" date="1997-01" db="EMBL/GenBank/DDBJ databases">
        <title>Sequence of minutes 4-25 of Escherichia coli.</title>
        <authorList>
            <person name="Chung E."/>
            <person name="Allen E."/>
            <person name="Araujo R."/>
            <person name="Aparicio A.M."/>
            <person name="Davis K."/>
            <person name="Duncan M."/>
            <person name="Federspiel N."/>
            <person name="Hyman R."/>
            <person name="Kalman S."/>
            <person name="Komp C."/>
            <person name="Kurdi O."/>
            <person name="Lew H."/>
            <person name="Lin D."/>
            <person name="Namath A."/>
            <person name="Oefner P."/>
            <person name="Roberts D."/>
            <person name="Schramm S."/>
            <person name="Davis R.W."/>
        </authorList>
    </citation>
    <scope>NUCLEOTIDE SEQUENCE [LARGE SCALE GENOMIC DNA] OF 482-647</scope>
    <source>
        <strain>K12 / MG1655 / ATCC 47076</strain>
    </source>
</reference>
<reference key="6">
    <citation type="journal article" date="1987" name="Mol. Gen. Genet.">
        <title>Nucleotide sequence of the fhuC and fhuD genes involved in iron (III) hydroxamate transport: domains in FhuC homologous to ATP-binding proteins.</title>
        <authorList>
            <person name="Burkhardt R."/>
            <person name="Braun V."/>
        </authorList>
    </citation>
    <scope>NUCLEOTIDE SEQUENCE [GENOMIC DNA] OF 723-747</scope>
</reference>
<reference key="7">
    <citation type="journal article" date="1975" name="FEBS Lett.">
        <title>Membrane receptor dependent iron transport in Escherichia coli.</title>
        <authorList>
            <person name="Hantke K."/>
            <person name="Braun V."/>
        </authorList>
    </citation>
    <scope>FUNCTION</scope>
</reference>
<reference key="8">
    <citation type="journal article" date="1978" name="J. Bacteriol.">
        <title>Functional interaction of the tonA/tonB receptor system in Escherichia coli.</title>
        <authorList>
            <person name="Hantke K."/>
            <person name="Braun V."/>
        </authorList>
    </citation>
    <scope>FUNCTION</scope>
</reference>
<reference key="9">
    <citation type="journal article" date="1991" name="J. Bacteriol.">
        <title>Internal deletions in the FhuA receptor of Escherichia coli K-12 define domains of ligand interactions.</title>
        <authorList>
            <person name="Carmel G."/>
            <person name="Coulton J.W."/>
        </authorList>
    </citation>
    <scope>FUNCTION</scope>
    <scope>SUBCELLULAR LOCATION</scope>
    <source>
        <strain>K12 / MC4100 / ATCC 35695 / DSM 6574</strain>
    </source>
</reference>
<reference key="10">
    <citation type="journal article" date="1994" name="FEBS Lett.">
        <title>Energy-coupled transport through the outer membrane of Escherichia coli small deletions in the gating loop convert the FhuA transport protein into a diffusion channel.</title>
        <authorList>
            <person name="Braun V."/>
            <person name="Killman H."/>
            <person name="Benz R."/>
        </authorList>
    </citation>
    <scope>REVIEW</scope>
</reference>
<reference key="11">
    <citation type="journal article" date="1996" name="Biochemistry">
        <title>Purification and structural and functional characterization of FhuA, a transporter of the Escherichia coli outer membrane.</title>
        <authorList>
            <person name="Boulanger P."/>
            <person name="le Maire M."/>
            <person name="Bonhivers M."/>
            <person name="Dubois S."/>
            <person name="Desmadril M."/>
            <person name="Letellier L."/>
        </authorList>
    </citation>
    <scope>SUBCELLULAR LOCATION</scope>
    <scope>SUBUNIT</scope>
    <source>
        <strain>K12</strain>
    </source>
</reference>
<reference key="12">
    <citation type="journal article" date="1996" name="EMBO J.">
        <title>FhuA, a transporter of the Escherichia coli outer membrane, is converted into a channel upon binding of bacteriophage T5.</title>
        <authorList>
            <person name="Bonhivers M."/>
            <person name="Ghazi A."/>
            <person name="Boulanger P."/>
            <person name="Letellier L."/>
        </authorList>
    </citation>
    <scope>FUNCTION AS A ION CHANNEL</scope>
    <scope>DOMAIN</scope>
</reference>
<reference key="13">
    <citation type="journal article" date="1997" name="J. Biol. Chem.">
        <title>Cell envelope signaling in Escherichia coli. Ligand binding to the ferrichrome-iron receptor fhua promotes interaction with the energy-transducing protein TonB.</title>
        <authorList>
            <person name="Moeck G.S."/>
            <person name="Coulton J.W."/>
            <person name="Postle K."/>
        </authorList>
    </citation>
    <scope>FUNCTION</scope>
    <scope>ACTIVITY REGULATION</scope>
    <scope>INTERACTION WITH TONB</scope>
    <scope>DOMAIN</scope>
</reference>
<reference key="14">
    <citation type="journal article" date="2002" name="Microbiology">
        <title>TonB of Escherichia coli activates FhuA through interaction with the beta-barrel.</title>
        <authorList>
            <person name="Killmann H."/>
            <person name="Herrmann C."/>
            <person name="Torun A."/>
            <person name="Jung G."/>
            <person name="Braun V."/>
        </authorList>
    </citation>
    <scope>FUNCTION</scope>
    <scope>ACTIVITY REGULATION</scope>
    <scope>INTERACTION WITH TONB</scope>
</reference>
<reference key="15">
    <citation type="journal article" date="2008" name="Protein Sci.">
        <title>TonB induces conformational changes in surface-exposed loops of FhuA, outer membrane receptor of Escherichia coli.</title>
        <authorList>
            <person name="James K.J."/>
            <person name="Hancock M.A."/>
            <person name="Moreau V."/>
            <person name="Molina F."/>
            <person name="Coulton J.W."/>
        </authorList>
    </citation>
    <scope>INTERACTION WITH TONB</scope>
    <scope>DOMAIN</scope>
</reference>
<reference key="16">
    <citation type="journal article" date="2009" name="Mol. Cell">
        <title>Hydroxyurea induces hydroxyl radical-mediated cell death in Escherichia coli.</title>
        <authorList>
            <person name="Davies B.W."/>
            <person name="Kohanski M.A."/>
            <person name="Simmons L.A."/>
            <person name="Winkler J.A."/>
            <person name="Collins J.J."/>
            <person name="Walker G.C."/>
        </authorList>
    </citation>
    <scope>INDUCTION BY HYDROXYUREA</scope>
    <source>
        <strain>K12 / MC4100 / ATCC 35695 / DSM 6574</strain>
    </source>
</reference>
<reference evidence="24 27" key="17">
    <citation type="journal article" date="1998" name="Science">
        <title>Siderophore-mediated iron transport: crystal structure of FhuA with bound lipopolysaccharide.</title>
        <authorList>
            <person name="Ferguson A.D."/>
            <person name="Hofmann E."/>
            <person name="Coulton J.W."/>
            <person name="Diederichs K."/>
            <person name="Welte W."/>
        </authorList>
    </citation>
    <scope>X-RAY CRYSTALLOGRAPHY (2.7 ANGSTROMS) OF 34-747 IN COMPLEX WITH FERRICHROME</scope>
    <scope>SUBUNIT</scope>
    <scope>SUBCELLULAR LOCATION</scope>
</reference>
<reference evidence="22 23" key="18">
    <citation type="journal article" date="1998" name="Cell">
        <title>Transmembrane signaling across the ligand-gated FhuA receptor: crystal structures of free and ferrichrome-bound states reveal allosteric changes.</title>
        <authorList>
            <person name="Locher K.P."/>
            <person name="Rees B."/>
            <person name="Koebnik R."/>
            <person name="Mitschler A."/>
            <person name="Moulinier L."/>
            <person name="Rosenbusch J.P."/>
            <person name="Moras D."/>
        </authorList>
    </citation>
    <scope>X-RAY CRYSTALLOGRAPHY (2.7 ANGSTROMS) OF 53-747 IN COMPLEX WITH FERRICHROME</scope>
    <scope>SUBUNIT</scope>
    <scope>SUBCELLULAR LOCATION</scope>
    <scope>DOMAIN</scope>
</reference>
<reference evidence="25 26" key="19">
    <citation type="journal article" date="2000" name="Protein Sci.">
        <title>Crystal structure of the antibiotic albomycin in complex with the outer membrane transporter FhuA.</title>
        <authorList>
            <person name="Ferguson A.D."/>
            <person name="Braun V."/>
            <person name="Fiedler H.-P."/>
            <person name="Coulton J.W."/>
            <person name="Diederichs K."/>
            <person name="Welte W."/>
        </authorList>
    </citation>
    <scope>X-RAY CRYSTALLOGRAPHY (2.95 ANGSTROMS) OF 34-747 IN COMPLEXES WITH PHENYLFERRICROCIN AND ALBOMYCIN</scope>
</reference>
<reference evidence="28 29" key="20">
    <citation type="journal article" date="2022" name="Proc. Natl. Acad. Sci. U.S.A.">
        <title>Structural basis for host recognition and superinfection exclusion by bacteriophage T5.</title>
        <authorList>
            <person name="van den Berg B."/>
            <person name="Silale A."/>
            <person name="Basle A."/>
            <person name="Brandner A.F."/>
            <person name="Mader S.L."/>
            <person name="Khalid S."/>
        </authorList>
    </citation>
    <scope>STRUCTURE BY ELECTRON MICROSCOPY (3.10 ANGSTROMS) OF 34-747</scope>
    <scope>INTERACTION WITH ESCHERICHIA PHAGE T5 RBP-PB5</scope>
    <scope>SUBUNIT</scope>
</reference>
<reference evidence="30" key="21">
    <citation type="journal article" date="2023" name="J. Virol.">
        <title>Deciphering Bacteriophage T5 Host Recognition Mechanism and Infection Trigger.</title>
        <authorList>
            <person name="Degroux S."/>
            <person name="Effantin G."/>
            <person name="Linares R."/>
            <person name="Schoehn G."/>
            <person name="Breyton C."/>
        </authorList>
    </citation>
    <scope>STRUCTURE BY ELECTRON MICROSCOPY (2.60 ANGSTROMS) OF 34-747</scope>
    <scope>INTERACTION WITH ESCHERICHIA PHAGE T5 RBP-PB5</scope>
    <scope>SUBUNIT</scope>
</reference>